<comment type="function">
    <text evidence="1">Involved in mRNA degradation. Catalyzes the phosphorolysis of single-stranded polyribonucleotides processively in the 3'- to 5'-direction.</text>
</comment>
<comment type="catalytic activity">
    <reaction evidence="1">
        <text>RNA(n+1) + phosphate = RNA(n) + a ribonucleoside 5'-diphosphate</text>
        <dbReference type="Rhea" id="RHEA:22096"/>
        <dbReference type="Rhea" id="RHEA-COMP:14527"/>
        <dbReference type="Rhea" id="RHEA-COMP:17342"/>
        <dbReference type="ChEBI" id="CHEBI:43474"/>
        <dbReference type="ChEBI" id="CHEBI:57930"/>
        <dbReference type="ChEBI" id="CHEBI:140395"/>
        <dbReference type="EC" id="2.7.7.8"/>
    </reaction>
</comment>
<comment type="cofactor">
    <cofactor evidence="1">
        <name>Mg(2+)</name>
        <dbReference type="ChEBI" id="CHEBI:18420"/>
    </cofactor>
</comment>
<comment type="subcellular location">
    <subcellularLocation>
        <location evidence="1">Cytoplasm</location>
    </subcellularLocation>
</comment>
<comment type="similarity">
    <text evidence="1">Belongs to the polyribonucleotide nucleotidyltransferase family.</text>
</comment>
<name>PNP_BDEBA</name>
<feature type="chain" id="PRO_0000329530" description="Polyribonucleotide nucleotidyltransferase">
    <location>
        <begin position="1"/>
        <end position="697"/>
    </location>
</feature>
<feature type="domain" description="KH" evidence="1">
    <location>
        <begin position="556"/>
        <end position="615"/>
    </location>
</feature>
<feature type="domain" description="S1 motif" evidence="1">
    <location>
        <begin position="625"/>
        <end position="693"/>
    </location>
</feature>
<feature type="binding site" evidence="1">
    <location>
        <position position="489"/>
    </location>
    <ligand>
        <name>Mg(2+)</name>
        <dbReference type="ChEBI" id="CHEBI:18420"/>
    </ligand>
</feature>
<feature type="binding site" evidence="1">
    <location>
        <position position="495"/>
    </location>
    <ligand>
        <name>Mg(2+)</name>
        <dbReference type="ChEBI" id="CHEBI:18420"/>
    </ligand>
</feature>
<accession>Q6MMS2</accession>
<evidence type="ECO:0000255" key="1">
    <source>
        <dbReference type="HAMAP-Rule" id="MF_01595"/>
    </source>
</evidence>
<dbReference type="EC" id="2.7.7.8" evidence="1"/>
<dbReference type="EMBL" id="BX842650">
    <property type="protein sequence ID" value="CAE79431.1"/>
    <property type="molecule type" value="Genomic_DNA"/>
</dbReference>
<dbReference type="RefSeq" id="WP_011164033.1">
    <property type="nucleotide sequence ID" value="NC_005363.1"/>
</dbReference>
<dbReference type="SMR" id="Q6MMS2"/>
<dbReference type="STRING" id="264462.Bd1551"/>
<dbReference type="GeneID" id="93012548"/>
<dbReference type="KEGG" id="bba:Bd1551"/>
<dbReference type="eggNOG" id="COG1185">
    <property type="taxonomic scope" value="Bacteria"/>
</dbReference>
<dbReference type="HOGENOM" id="CLU_004217_2_2_7"/>
<dbReference type="Proteomes" id="UP000008080">
    <property type="component" value="Chromosome"/>
</dbReference>
<dbReference type="GO" id="GO:0005829">
    <property type="term" value="C:cytosol"/>
    <property type="evidence" value="ECO:0007669"/>
    <property type="project" value="TreeGrafter"/>
</dbReference>
<dbReference type="GO" id="GO:0000175">
    <property type="term" value="F:3'-5'-RNA exonuclease activity"/>
    <property type="evidence" value="ECO:0007669"/>
    <property type="project" value="TreeGrafter"/>
</dbReference>
<dbReference type="GO" id="GO:0000287">
    <property type="term" value="F:magnesium ion binding"/>
    <property type="evidence" value="ECO:0007669"/>
    <property type="project" value="UniProtKB-UniRule"/>
</dbReference>
<dbReference type="GO" id="GO:0004654">
    <property type="term" value="F:polyribonucleotide nucleotidyltransferase activity"/>
    <property type="evidence" value="ECO:0007669"/>
    <property type="project" value="UniProtKB-UniRule"/>
</dbReference>
<dbReference type="GO" id="GO:0003723">
    <property type="term" value="F:RNA binding"/>
    <property type="evidence" value="ECO:0007669"/>
    <property type="project" value="UniProtKB-UniRule"/>
</dbReference>
<dbReference type="GO" id="GO:0006402">
    <property type="term" value="P:mRNA catabolic process"/>
    <property type="evidence" value="ECO:0007669"/>
    <property type="project" value="UniProtKB-UniRule"/>
</dbReference>
<dbReference type="GO" id="GO:0006396">
    <property type="term" value="P:RNA processing"/>
    <property type="evidence" value="ECO:0007669"/>
    <property type="project" value="InterPro"/>
</dbReference>
<dbReference type="CDD" id="cd02393">
    <property type="entry name" value="KH-I_PNPase"/>
    <property type="match status" value="1"/>
</dbReference>
<dbReference type="CDD" id="cd11363">
    <property type="entry name" value="RNase_PH_PNPase_1"/>
    <property type="match status" value="1"/>
</dbReference>
<dbReference type="CDD" id="cd11364">
    <property type="entry name" value="RNase_PH_PNPase_2"/>
    <property type="match status" value="1"/>
</dbReference>
<dbReference type="CDD" id="cd04472">
    <property type="entry name" value="S1_PNPase"/>
    <property type="match status" value="1"/>
</dbReference>
<dbReference type="FunFam" id="3.30.1370.10:FF:000001">
    <property type="entry name" value="Polyribonucleotide nucleotidyltransferase"/>
    <property type="match status" value="1"/>
</dbReference>
<dbReference type="FunFam" id="3.30.230.70:FF:000001">
    <property type="entry name" value="Polyribonucleotide nucleotidyltransferase"/>
    <property type="match status" value="1"/>
</dbReference>
<dbReference type="FunFam" id="3.30.230.70:FF:000002">
    <property type="entry name" value="Polyribonucleotide nucleotidyltransferase"/>
    <property type="match status" value="1"/>
</dbReference>
<dbReference type="FunFam" id="2.40.50.140:FF:000189">
    <property type="entry name" value="Polyribonucleotide nucleotidyltransferase, putative"/>
    <property type="match status" value="1"/>
</dbReference>
<dbReference type="Gene3D" id="3.30.230.70">
    <property type="entry name" value="GHMP Kinase, N-terminal domain"/>
    <property type="match status" value="2"/>
</dbReference>
<dbReference type="Gene3D" id="3.30.1370.10">
    <property type="entry name" value="K Homology domain, type 1"/>
    <property type="match status" value="1"/>
</dbReference>
<dbReference type="Gene3D" id="2.40.50.140">
    <property type="entry name" value="Nucleic acid-binding proteins"/>
    <property type="match status" value="1"/>
</dbReference>
<dbReference type="HAMAP" id="MF_01595">
    <property type="entry name" value="PNPase"/>
    <property type="match status" value="1"/>
</dbReference>
<dbReference type="InterPro" id="IPR001247">
    <property type="entry name" value="ExoRNase_PH_dom1"/>
</dbReference>
<dbReference type="InterPro" id="IPR015847">
    <property type="entry name" value="ExoRNase_PH_dom2"/>
</dbReference>
<dbReference type="InterPro" id="IPR036345">
    <property type="entry name" value="ExoRNase_PH_dom2_sf"/>
</dbReference>
<dbReference type="InterPro" id="IPR004087">
    <property type="entry name" value="KH_dom"/>
</dbReference>
<dbReference type="InterPro" id="IPR004088">
    <property type="entry name" value="KH_dom_type_1"/>
</dbReference>
<dbReference type="InterPro" id="IPR036612">
    <property type="entry name" value="KH_dom_type_1_sf"/>
</dbReference>
<dbReference type="InterPro" id="IPR012340">
    <property type="entry name" value="NA-bd_OB-fold"/>
</dbReference>
<dbReference type="InterPro" id="IPR012162">
    <property type="entry name" value="PNPase"/>
</dbReference>
<dbReference type="InterPro" id="IPR027408">
    <property type="entry name" value="PNPase/RNase_PH_dom_sf"/>
</dbReference>
<dbReference type="InterPro" id="IPR015848">
    <property type="entry name" value="PNPase_PH_RNA-bd_bac/org-type"/>
</dbReference>
<dbReference type="InterPro" id="IPR036456">
    <property type="entry name" value="PNPase_PH_RNA-bd_sf"/>
</dbReference>
<dbReference type="InterPro" id="IPR020568">
    <property type="entry name" value="Ribosomal_Su5_D2-typ_SF"/>
</dbReference>
<dbReference type="InterPro" id="IPR003029">
    <property type="entry name" value="S1_domain"/>
</dbReference>
<dbReference type="NCBIfam" id="TIGR03591">
    <property type="entry name" value="polynuc_phos"/>
    <property type="match status" value="1"/>
</dbReference>
<dbReference type="NCBIfam" id="NF008805">
    <property type="entry name" value="PRK11824.1"/>
    <property type="match status" value="1"/>
</dbReference>
<dbReference type="PANTHER" id="PTHR11252">
    <property type="entry name" value="POLYRIBONUCLEOTIDE NUCLEOTIDYLTRANSFERASE"/>
    <property type="match status" value="1"/>
</dbReference>
<dbReference type="PANTHER" id="PTHR11252:SF0">
    <property type="entry name" value="POLYRIBONUCLEOTIDE NUCLEOTIDYLTRANSFERASE 1, MITOCHONDRIAL"/>
    <property type="match status" value="1"/>
</dbReference>
<dbReference type="Pfam" id="PF00013">
    <property type="entry name" value="KH_1"/>
    <property type="match status" value="1"/>
</dbReference>
<dbReference type="Pfam" id="PF03726">
    <property type="entry name" value="PNPase"/>
    <property type="match status" value="1"/>
</dbReference>
<dbReference type="Pfam" id="PF01138">
    <property type="entry name" value="RNase_PH"/>
    <property type="match status" value="2"/>
</dbReference>
<dbReference type="Pfam" id="PF03725">
    <property type="entry name" value="RNase_PH_C"/>
    <property type="match status" value="2"/>
</dbReference>
<dbReference type="Pfam" id="PF00575">
    <property type="entry name" value="S1"/>
    <property type="match status" value="1"/>
</dbReference>
<dbReference type="PIRSF" id="PIRSF005499">
    <property type="entry name" value="PNPase"/>
    <property type="match status" value="1"/>
</dbReference>
<dbReference type="SMART" id="SM00322">
    <property type="entry name" value="KH"/>
    <property type="match status" value="1"/>
</dbReference>
<dbReference type="SMART" id="SM00316">
    <property type="entry name" value="S1"/>
    <property type="match status" value="1"/>
</dbReference>
<dbReference type="SUPFAM" id="SSF54791">
    <property type="entry name" value="Eukaryotic type KH-domain (KH-domain type I)"/>
    <property type="match status" value="1"/>
</dbReference>
<dbReference type="SUPFAM" id="SSF50249">
    <property type="entry name" value="Nucleic acid-binding proteins"/>
    <property type="match status" value="1"/>
</dbReference>
<dbReference type="SUPFAM" id="SSF46915">
    <property type="entry name" value="Polynucleotide phosphorylase/guanosine pentaphosphate synthase (PNPase/GPSI), domain 3"/>
    <property type="match status" value="1"/>
</dbReference>
<dbReference type="SUPFAM" id="SSF55666">
    <property type="entry name" value="Ribonuclease PH domain 2-like"/>
    <property type="match status" value="2"/>
</dbReference>
<dbReference type="SUPFAM" id="SSF54211">
    <property type="entry name" value="Ribosomal protein S5 domain 2-like"/>
    <property type="match status" value="2"/>
</dbReference>
<dbReference type="PROSITE" id="PS50084">
    <property type="entry name" value="KH_TYPE_1"/>
    <property type="match status" value="1"/>
</dbReference>
<dbReference type="PROSITE" id="PS50126">
    <property type="entry name" value="S1"/>
    <property type="match status" value="1"/>
</dbReference>
<proteinExistence type="inferred from homology"/>
<keyword id="KW-0963">Cytoplasm</keyword>
<keyword id="KW-0460">Magnesium</keyword>
<keyword id="KW-0479">Metal-binding</keyword>
<keyword id="KW-0548">Nucleotidyltransferase</keyword>
<keyword id="KW-1185">Reference proteome</keyword>
<keyword id="KW-0694">RNA-binding</keyword>
<keyword id="KW-0808">Transferase</keyword>
<reference key="1">
    <citation type="journal article" date="2004" name="Science">
        <title>A predator unmasked: life cycle of Bdellovibrio bacteriovorus from a genomic perspective.</title>
        <authorList>
            <person name="Rendulic S."/>
            <person name="Jagtap P."/>
            <person name="Rosinus A."/>
            <person name="Eppinger M."/>
            <person name="Baar C."/>
            <person name="Lanz C."/>
            <person name="Keller H."/>
            <person name="Lambert C."/>
            <person name="Evans K.J."/>
            <person name="Goesmann A."/>
            <person name="Meyer F."/>
            <person name="Sockett R.E."/>
            <person name="Schuster S.C."/>
        </authorList>
    </citation>
    <scope>NUCLEOTIDE SEQUENCE [LARGE SCALE GENOMIC DNA]</scope>
    <source>
        <strain>ATCC 15356 / DSM 50701 / NCIMB 9529 / HD100</strain>
    </source>
</reference>
<organism>
    <name type="scientific">Bdellovibrio bacteriovorus (strain ATCC 15356 / DSM 50701 / NCIMB 9529 / HD100)</name>
    <dbReference type="NCBI Taxonomy" id="264462"/>
    <lineage>
        <taxon>Bacteria</taxon>
        <taxon>Pseudomonadati</taxon>
        <taxon>Bdellovibrionota</taxon>
        <taxon>Bdellovibrionia</taxon>
        <taxon>Bdellovibrionales</taxon>
        <taxon>Pseudobdellovibrionaceae</taxon>
        <taxon>Bdellovibrio</taxon>
    </lineage>
</organism>
<protein>
    <recommendedName>
        <fullName evidence="1">Polyribonucleotide nucleotidyltransferase</fullName>
        <ecNumber evidence="1">2.7.7.8</ecNumber>
    </recommendedName>
    <alternativeName>
        <fullName evidence="1">Polynucleotide phosphorylase</fullName>
        <shortName evidence="1">PNPase</shortName>
    </alternativeName>
</protein>
<sequence length="697" mass="75122">MKTTVTTSVGGKQITIETGRLAKQADGAALVSSGNNMVLVTATSSKKASELDFFPLTVEYIEKFYATGKIPGGYFKREAKPTNDAVLIARLIDRPIRPVFPEGYRHETQIVATVLSADGAFPLEILASLGASAALHCSDIPFNGPTAAVQIARVDGQFVANPTPQQMEKSDMDMIVAGTRNGLLMVEGETKFISEADALAALKFGHQSLIPLLNAQDELREKAGSVAKRAFTAPSIDADFKAKAESLLRPKIAAALSIKEKQDRYAAANEAAAEAEKALLADIADKELLKQRKKELNSIVEDLKYQEARSMILDRAVRIDGRDVKTVRPIANEVGILPRAHGSGLFTRGETQVLGTVTLGTADDEQMVDSLLGLQKRKFMLHYNFPPYSVGEVGRMSGTSRREIGHGNLAERAIKAVLPDFEKFPYTIRIVSEVLESNGSSSMGTVCSGIMALLDAGVPLKGNVAGVAMGLIKEGDRVAVLTDILGDEDHLGDMDFKVAGSPAGITALQMDIKIDSVSFEVMEQALAQAKEGRAHILNEMEKVMKVPRGQISEFAPRIETIKIKPDKIREVIGSGGKVIRGITEATGVKIEIQDDGTINIASADPEATKKAIAMINDIIAEAEVGKTYKGRIVKIAEFGAFVEILPNTQGLLHISEISNERVRAVSDVLKEGEIIDVKVLEVDRSGRVKLSRKALLQ</sequence>
<gene>
    <name evidence="1" type="primary">pnp</name>
    <name type="ordered locus">Bd1551</name>
</gene>